<dbReference type="EMBL" id="CP000507">
    <property type="protein sequence ID" value="ABM00261.1"/>
    <property type="molecule type" value="Genomic_DNA"/>
</dbReference>
<dbReference type="RefSeq" id="WP_011760168.1">
    <property type="nucleotide sequence ID" value="NC_008700.1"/>
</dbReference>
<dbReference type="SMR" id="A1S7A4"/>
<dbReference type="STRING" id="326297.Sama_2055"/>
<dbReference type="KEGG" id="saz:Sama_2055"/>
<dbReference type="eggNOG" id="COG0361">
    <property type="taxonomic scope" value="Bacteria"/>
</dbReference>
<dbReference type="HOGENOM" id="CLU_151267_1_0_6"/>
<dbReference type="OrthoDB" id="9803250at2"/>
<dbReference type="Proteomes" id="UP000009175">
    <property type="component" value="Chromosome"/>
</dbReference>
<dbReference type="GO" id="GO:0005829">
    <property type="term" value="C:cytosol"/>
    <property type="evidence" value="ECO:0007669"/>
    <property type="project" value="TreeGrafter"/>
</dbReference>
<dbReference type="GO" id="GO:0043022">
    <property type="term" value="F:ribosome binding"/>
    <property type="evidence" value="ECO:0007669"/>
    <property type="project" value="UniProtKB-UniRule"/>
</dbReference>
<dbReference type="GO" id="GO:0019843">
    <property type="term" value="F:rRNA binding"/>
    <property type="evidence" value="ECO:0007669"/>
    <property type="project" value="UniProtKB-UniRule"/>
</dbReference>
<dbReference type="GO" id="GO:0003743">
    <property type="term" value="F:translation initiation factor activity"/>
    <property type="evidence" value="ECO:0007669"/>
    <property type="project" value="UniProtKB-UniRule"/>
</dbReference>
<dbReference type="CDD" id="cd04451">
    <property type="entry name" value="S1_IF1"/>
    <property type="match status" value="1"/>
</dbReference>
<dbReference type="FunFam" id="2.40.50.140:FF:000002">
    <property type="entry name" value="Translation initiation factor IF-1"/>
    <property type="match status" value="1"/>
</dbReference>
<dbReference type="Gene3D" id="2.40.50.140">
    <property type="entry name" value="Nucleic acid-binding proteins"/>
    <property type="match status" value="1"/>
</dbReference>
<dbReference type="HAMAP" id="MF_00075">
    <property type="entry name" value="IF_1"/>
    <property type="match status" value="1"/>
</dbReference>
<dbReference type="InterPro" id="IPR012340">
    <property type="entry name" value="NA-bd_OB-fold"/>
</dbReference>
<dbReference type="InterPro" id="IPR006196">
    <property type="entry name" value="RNA-binding_domain_S1_IF1"/>
</dbReference>
<dbReference type="InterPro" id="IPR003029">
    <property type="entry name" value="S1_domain"/>
</dbReference>
<dbReference type="InterPro" id="IPR004368">
    <property type="entry name" value="TIF_IF1"/>
</dbReference>
<dbReference type="NCBIfam" id="TIGR00008">
    <property type="entry name" value="infA"/>
    <property type="match status" value="1"/>
</dbReference>
<dbReference type="PANTHER" id="PTHR33370">
    <property type="entry name" value="TRANSLATION INITIATION FACTOR IF-1, CHLOROPLASTIC"/>
    <property type="match status" value="1"/>
</dbReference>
<dbReference type="PANTHER" id="PTHR33370:SF1">
    <property type="entry name" value="TRANSLATION INITIATION FACTOR IF-1, CHLOROPLASTIC"/>
    <property type="match status" value="1"/>
</dbReference>
<dbReference type="Pfam" id="PF01176">
    <property type="entry name" value="eIF-1a"/>
    <property type="match status" value="1"/>
</dbReference>
<dbReference type="SMART" id="SM00316">
    <property type="entry name" value="S1"/>
    <property type="match status" value="1"/>
</dbReference>
<dbReference type="SUPFAM" id="SSF50249">
    <property type="entry name" value="Nucleic acid-binding proteins"/>
    <property type="match status" value="1"/>
</dbReference>
<dbReference type="PROSITE" id="PS50832">
    <property type="entry name" value="S1_IF1_TYPE"/>
    <property type="match status" value="1"/>
</dbReference>
<reference key="1">
    <citation type="submission" date="2006-12" db="EMBL/GenBank/DDBJ databases">
        <title>Complete sequence of Shewanella amazonensis SB2B.</title>
        <authorList>
            <consortium name="US DOE Joint Genome Institute"/>
            <person name="Copeland A."/>
            <person name="Lucas S."/>
            <person name="Lapidus A."/>
            <person name="Barry K."/>
            <person name="Detter J.C."/>
            <person name="Glavina del Rio T."/>
            <person name="Hammon N."/>
            <person name="Israni S."/>
            <person name="Dalin E."/>
            <person name="Tice H."/>
            <person name="Pitluck S."/>
            <person name="Munk A.C."/>
            <person name="Brettin T."/>
            <person name="Bruce D."/>
            <person name="Han C."/>
            <person name="Tapia R."/>
            <person name="Gilna P."/>
            <person name="Schmutz J."/>
            <person name="Larimer F."/>
            <person name="Land M."/>
            <person name="Hauser L."/>
            <person name="Kyrpides N."/>
            <person name="Mikhailova N."/>
            <person name="Fredrickson J."/>
            <person name="Richardson P."/>
        </authorList>
    </citation>
    <scope>NUCLEOTIDE SEQUENCE [LARGE SCALE GENOMIC DNA]</scope>
    <source>
        <strain>ATCC BAA-1098 / SB2B</strain>
    </source>
</reference>
<sequence>MAKEDSIEMQGTILETLPNTMFRVELENGHVVIAHISGKMRKNYIRILTGDKVTVQLTPYDLTKGRIVFRAR</sequence>
<keyword id="KW-0963">Cytoplasm</keyword>
<keyword id="KW-0396">Initiation factor</keyword>
<keyword id="KW-0648">Protein biosynthesis</keyword>
<keyword id="KW-1185">Reference proteome</keyword>
<keyword id="KW-0694">RNA-binding</keyword>
<keyword id="KW-0699">rRNA-binding</keyword>
<comment type="function">
    <text evidence="1">One of the essential components for the initiation of protein synthesis. Stabilizes the binding of IF-2 and IF-3 on the 30S subunit to which N-formylmethionyl-tRNA(fMet) subsequently binds. Helps modulate mRNA selection, yielding the 30S pre-initiation complex (PIC). Upon addition of the 50S ribosomal subunit IF-1, IF-2 and IF-3 are released leaving the mature 70S translation initiation complex.</text>
</comment>
<comment type="subunit">
    <text evidence="1">Component of the 30S ribosomal translation pre-initiation complex which assembles on the 30S ribosome in the order IF-2 and IF-3, IF-1 and N-formylmethionyl-tRNA(fMet); mRNA recruitment can occur at any time during PIC assembly.</text>
</comment>
<comment type="subcellular location">
    <subcellularLocation>
        <location evidence="1">Cytoplasm</location>
    </subcellularLocation>
</comment>
<comment type="similarity">
    <text evidence="1">Belongs to the IF-1 family.</text>
</comment>
<gene>
    <name evidence="1" type="primary">infA</name>
    <name type="ordered locus">Sama_2055</name>
</gene>
<organism>
    <name type="scientific">Shewanella amazonensis (strain ATCC BAA-1098 / SB2B)</name>
    <dbReference type="NCBI Taxonomy" id="326297"/>
    <lineage>
        <taxon>Bacteria</taxon>
        <taxon>Pseudomonadati</taxon>
        <taxon>Pseudomonadota</taxon>
        <taxon>Gammaproteobacteria</taxon>
        <taxon>Alteromonadales</taxon>
        <taxon>Shewanellaceae</taxon>
        <taxon>Shewanella</taxon>
    </lineage>
</organism>
<proteinExistence type="inferred from homology"/>
<feature type="chain" id="PRO_0000338915" description="Translation initiation factor IF-1">
    <location>
        <begin position="1"/>
        <end position="72"/>
    </location>
</feature>
<feature type="domain" description="S1-like" evidence="1">
    <location>
        <begin position="1"/>
        <end position="72"/>
    </location>
</feature>
<evidence type="ECO:0000255" key="1">
    <source>
        <dbReference type="HAMAP-Rule" id="MF_00075"/>
    </source>
</evidence>
<name>IF1_SHEAM</name>
<protein>
    <recommendedName>
        <fullName evidence="1">Translation initiation factor IF-1</fullName>
    </recommendedName>
</protein>
<accession>A1S7A4</accession>